<protein>
    <recommendedName>
        <fullName>Flagellin B2</fullName>
    </recommendedName>
</protein>
<gene>
    <name type="primary">flaB2</name>
    <name type="ordered locus">Nmag_2863</name>
</gene>
<sequence length="259" mass="26545">MFTNDTDDGRGQVGIGTLIVFIAMVLVAAIAAGVLINTAGMLQSQAEATGEESTDLVSERIDTTSAVGTVSTHVADGEDGADRGDLAEISIGVTGAPGADDIDLNETIIQVVGPEGQENLVMADGSNDMSEAGWDETSTTDIGSTESTDQGDTDDDVNASNIESGYFAVENEDGYFVEGSDAVLDDNNGELTIVFNPKVAPFGEADDVSGITPGDLHEDDVFGAGDEASVDIVSPSGATTSVELNSPDLFSEPGEAVRL</sequence>
<feature type="propeptide" id="PRO_0000009395" evidence="1">
    <location>
        <begin position="1"/>
        <end position="11"/>
    </location>
</feature>
<feature type="chain" id="PRO_0000009396" description="Flagellin B2">
    <location>
        <begin position="12"/>
        <end position="259"/>
    </location>
</feature>
<feature type="region of interest" description="Disordered" evidence="2">
    <location>
        <begin position="126"/>
        <end position="157"/>
    </location>
</feature>
<feature type="region of interest" description="Disordered" evidence="2">
    <location>
        <begin position="237"/>
        <end position="259"/>
    </location>
</feature>
<feature type="compositionally biased region" description="Polar residues" evidence="2">
    <location>
        <begin position="136"/>
        <end position="148"/>
    </location>
</feature>
<feature type="sequence conflict" description="In Ref. 1; CAA12418 and 2; CAB93656." evidence="3" ref="1 2">
    <original>I</original>
    <variation>M</variation>
    <location>
        <position position="36"/>
    </location>
</feature>
<feature type="sequence conflict" description="In Ref. 1; CAA12418 and 2; CAB93656." evidence="3" ref="1 2">
    <original>S</original>
    <variation>I</variation>
    <location>
        <position position="65"/>
    </location>
</feature>
<feature type="sequence conflict" description="In Ref. 1; CAA12418 and 2; CAB93656." evidence="3" ref="1 2">
    <original>Q</original>
    <variation>A</variation>
    <location>
        <position position="117"/>
    </location>
</feature>
<evidence type="ECO:0000250" key="1"/>
<evidence type="ECO:0000256" key="2">
    <source>
        <dbReference type="SAM" id="MobiDB-lite"/>
    </source>
</evidence>
<evidence type="ECO:0000305" key="3"/>
<keyword id="KW-0974">Archaeal flagellum</keyword>
<keyword id="KW-1185">Reference proteome</keyword>
<dbReference type="EMBL" id="AJ225175">
    <property type="protein sequence ID" value="CAA12418.1"/>
    <property type="molecule type" value="Genomic_DNA"/>
</dbReference>
<dbReference type="EMBL" id="AJ277988">
    <property type="protein sequence ID" value="CAB93656.1"/>
    <property type="molecule type" value="Genomic_DNA"/>
</dbReference>
<dbReference type="EMBL" id="CP001932">
    <property type="protein sequence ID" value="ADD06416.1"/>
    <property type="molecule type" value="Genomic_DNA"/>
</dbReference>
<dbReference type="RefSeq" id="WP_004267189.1">
    <property type="nucleotide sequence ID" value="NC_013922.1"/>
</dbReference>
<dbReference type="SMR" id="O93718"/>
<dbReference type="STRING" id="547559.Nmag_2863"/>
<dbReference type="PaxDb" id="547559-Nmag_2863"/>
<dbReference type="GeneID" id="8825722"/>
<dbReference type="KEGG" id="nmg:Nmag_2863"/>
<dbReference type="eggNOG" id="arCOG01829">
    <property type="taxonomic scope" value="Archaea"/>
</dbReference>
<dbReference type="HOGENOM" id="CLU_051124_1_0_2"/>
<dbReference type="OrthoDB" id="102632at2157"/>
<dbReference type="Proteomes" id="UP000001879">
    <property type="component" value="Chromosome"/>
</dbReference>
<dbReference type="GO" id="GO:0097589">
    <property type="term" value="C:archaeal-type flagellum"/>
    <property type="evidence" value="ECO:0007669"/>
    <property type="project" value="UniProtKB-SubCell"/>
</dbReference>
<dbReference type="GO" id="GO:0005198">
    <property type="term" value="F:structural molecule activity"/>
    <property type="evidence" value="ECO:0007669"/>
    <property type="project" value="InterPro"/>
</dbReference>
<dbReference type="GO" id="GO:0097588">
    <property type="term" value="P:archaeal or bacterial-type flagellum-dependent cell motility"/>
    <property type="evidence" value="ECO:0007669"/>
    <property type="project" value="InterPro"/>
</dbReference>
<dbReference type="InterPro" id="IPR013373">
    <property type="entry name" value="Flagellin/pilin_N_arc"/>
</dbReference>
<dbReference type="InterPro" id="IPR002774">
    <property type="entry name" value="Flagellin_arc"/>
</dbReference>
<dbReference type="NCBIfam" id="TIGR02537">
    <property type="entry name" value="arch_flag_Nterm"/>
    <property type="match status" value="1"/>
</dbReference>
<dbReference type="PANTHER" id="PTHR35903">
    <property type="entry name" value="FLAGELLIN B1"/>
    <property type="match status" value="1"/>
</dbReference>
<dbReference type="PANTHER" id="PTHR35903:SF1">
    <property type="entry name" value="FLAGELLIN B1"/>
    <property type="match status" value="1"/>
</dbReference>
<dbReference type="Pfam" id="PF01917">
    <property type="entry name" value="Arch_flagellin"/>
    <property type="match status" value="1"/>
</dbReference>
<reference key="1">
    <citation type="submission" date="1997-12" db="EMBL/GenBank/DDBJ databases">
        <title>Flagellins of Natromobacterium magadii: cloning and sequencing of the encoding genes.</title>
        <authorList>
            <person name="Serganova I.S."/>
            <person name="Serganov A.A."/>
            <person name="Metlina A.L."/>
            <person name="Fedorov O.V."/>
        </authorList>
    </citation>
    <scope>NUCLEOTIDE SEQUENCE [GENOMIC DNA]</scope>
</reference>
<reference key="2">
    <citation type="submission" date="2000-05" db="EMBL/GenBank/DDBJ databases">
        <title>Sequence organization of the flagellin gene region from Natrialba magadii.</title>
        <authorList>
            <person name="Serganova I.S."/>
            <person name="Ksenzenko V.N."/>
            <person name="Serganov A.A."/>
            <person name="Meshcheryakova I.V."/>
            <person name="Vakhrusheva O.E."/>
            <person name="Metlina A.L."/>
            <person name="Fedorov O.V."/>
        </authorList>
    </citation>
    <scope>NUCLEOTIDE SEQUENCE [GENOMIC DNA]</scope>
</reference>
<reference key="3">
    <citation type="journal article" date="2012" name="BMC Genomics">
        <title>A comparative genomics perspective on the genetic content of the alkaliphilic haloarchaeon Natrialba magadii ATCC 43099T.</title>
        <authorList>
            <person name="Siddaramappa S."/>
            <person name="Challacombe J.F."/>
            <person name="Decastro R.E."/>
            <person name="Pfeiffer F."/>
            <person name="Sastre D.E."/>
            <person name="Gimenez M.I."/>
            <person name="Paggi R.A."/>
            <person name="Detter J.C."/>
            <person name="Davenport K.W."/>
            <person name="Goodwin L.A."/>
            <person name="Kyrpides N."/>
            <person name="Tapia R."/>
            <person name="Pitluck S."/>
            <person name="Lucas S."/>
            <person name="Woyke T."/>
            <person name="Maupin-Furlow J.A."/>
        </authorList>
    </citation>
    <scope>NUCLEOTIDE SEQUENCE [LARGE SCALE GENOMIC DNA]</scope>
    <source>
        <strain>ATCC 43099 / DSM 3394 / CCM 3739 / CIP 104546 / IAM 13178 / JCM 8861 / NBRC 102185 / NCIMB 2190 / MS3</strain>
    </source>
</reference>
<accession>O93718</accession>
<accession>D3T0D7</accession>
<comment type="function">
    <text>Flagellin is the subunit protein which polymerizes to form the filaments of archaeal flagella.</text>
</comment>
<comment type="subcellular location">
    <subcellularLocation>
        <location>Archaeal flagellum</location>
    </subcellularLocation>
</comment>
<comment type="similarity">
    <text evidence="3">Belongs to the archaeal flagellin family.</text>
</comment>
<organism>
    <name type="scientific">Natrialba magadii (strain ATCC 43099 / DSM 3394 / CCM 3739 / CIP 104546 / IAM 13178 / JCM 8861 / NBRC 102185 / NCIMB 2190 / MS3)</name>
    <name type="common">Natronobacterium magadii</name>
    <dbReference type="NCBI Taxonomy" id="547559"/>
    <lineage>
        <taxon>Archaea</taxon>
        <taxon>Methanobacteriati</taxon>
        <taxon>Methanobacteriota</taxon>
        <taxon>Stenosarchaea group</taxon>
        <taxon>Halobacteria</taxon>
        <taxon>Halobacteriales</taxon>
        <taxon>Natrialbaceae</taxon>
        <taxon>Natrialba</taxon>
    </lineage>
</organism>
<name>FLAB2_NATMM</name>
<proteinExistence type="inferred from homology"/>